<comment type="function">
    <text>Actins are highly conserved proteins that are involved in various types of cell motility and are ubiquitously expressed in all eukaryotic cells.</text>
</comment>
<comment type="catalytic activity">
    <reaction evidence="2">
        <text>ATP + H2O = ADP + phosphate + H(+)</text>
        <dbReference type="Rhea" id="RHEA:13065"/>
        <dbReference type="ChEBI" id="CHEBI:15377"/>
        <dbReference type="ChEBI" id="CHEBI:15378"/>
        <dbReference type="ChEBI" id="CHEBI:30616"/>
        <dbReference type="ChEBI" id="CHEBI:43474"/>
        <dbReference type="ChEBI" id="CHEBI:456216"/>
    </reaction>
</comment>
<comment type="subcellular location">
    <subcellularLocation>
        <location>Cytoplasm</location>
        <location>Cytoskeleton</location>
    </subcellularLocation>
</comment>
<comment type="tissue specificity">
    <text>Muscle.</text>
</comment>
<comment type="PTM">
    <text evidence="1">Oxidation of Met-45 to form methionine sulfoxide promotes actin filament depolymerization. Methionine sulfoxide is produced stereospecifically, but it is not known whether the (S)-S-oxide or the (R)-S-oxide is produced (By similarity).</text>
</comment>
<comment type="similarity">
    <text evidence="3">Belongs to the actin family.</text>
</comment>
<feature type="propeptide" id="PRO_0000000620" description="Removed in mature form" evidence="1">
    <location>
        <begin position="1"/>
        <end position="2"/>
    </location>
</feature>
<feature type="chain" id="PRO_0000000621" description="Actin-5, muscle-specific">
    <location>
        <begin position="3"/>
        <end position="376"/>
    </location>
</feature>
<feature type="modified residue" description="N-acetylaspartate" evidence="1">
    <location>
        <position position="3"/>
    </location>
</feature>
<feature type="modified residue" description="Methionine sulfoxide" evidence="1">
    <location>
        <position position="45"/>
    </location>
</feature>
<feature type="modified residue" description="Methionine sulfoxide" evidence="1">
    <location>
        <position position="48"/>
    </location>
</feature>
<sequence>MCDDEASALVVDNGSGMCKAGFAGDDAPRAVFPSIVGRPRHQGVMVGMGQKDSYVGDEAQSKRGILTLKYPIEHGIITNWDDMEKVWHHTFYNELRVAPEEHPVLLTEAPLNPKANREKMTQIMFETFNSPAMYVAIQAVLSLYASGRTTGIVLDSGDGVSHTVPIYEGYALPHAILRLDLAGRDLTDYLMKILTERGYSFTTTAEREIVRDIKEKLCYVALDFEQEMATAAASTSLEKSYELPDGQVITIGNERFRTPEALFQPSFLGMESCGIHETVYQSIMKCDVDIRKDLYANNVLSGGTTMYPGIADRMQKEITALAPSTIKIKIIAPPERKYSVWIGGSILASLSTFQQMWISKQEYDESGPGIVHRKCF</sequence>
<evidence type="ECO:0000250" key="1"/>
<evidence type="ECO:0000250" key="2">
    <source>
        <dbReference type="UniProtKB" id="P68137"/>
    </source>
</evidence>
<evidence type="ECO:0000305" key="3"/>
<reference key="1">
    <citation type="journal article" date="1994" name="Insect Biochem. Mol. Biol.">
        <title>The actin gene family in the oriental fruit fly Bactrocera dorsalis. Muscle specific actins.</title>
        <authorList>
            <person name="He M."/>
            <person name="Haymer D.S."/>
        </authorList>
    </citation>
    <scope>NUCLEOTIDE SEQUENCE [GENOMIC DNA]</scope>
    <source>
        <strain>Puna</strain>
    </source>
</reference>
<keyword id="KW-0007">Acetylation</keyword>
<keyword id="KW-0067">ATP-binding</keyword>
<keyword id="KW-0963">Cytoplasm</keyword>
<keyword id="KW-0206">Cytoskeleton</keyword>
<keyword id="KW-0378">Hydrolase</keyword>
<keyword id="KW-0514">Muscle protein</keyword>
<keyword id="KW-0547">Nucleotide-binding</keyword>
<keyword id="KW-0558">Oxidation</keyword>
<keyword id="KW-1185">Reference proteome</keyword>
<accession>P45887</accession>
<protein>
    <recommendedName>
        <fullName>Actin-5, muscle-specific</fullName>
        <ecNumber evidence="2">3.6.4.-</ecNumber>
    </recommendedName>
</protein>
<organism>
    <name type="scientific">Bactrocera dorsalis</name>
    <name type="common">Oriental fruit fly</name>
    <name type="synonym">Dacus dorsalis</name>
    <dbReference type="NCBI Taxonomy" id="27457"/>
    <lineage>
        <taxon>Eukaryota</taxon>
        <taxon>Metazoa</taxon>
        <taxon>Ecdysozoa</taxon>
        <taxon>Arthropoda</taxon>
        <taxon>Hexapoda</taxon>
        <taxon>Insecta</taxon>
        <taxon>Pterygota</taxon>
        <taxon>Neoptera</taxon>
        <taxon>Endopterygota</taxon>
        <taxon>Diptera</taxon>
        <taxon>Brachycera</taxon>
        <taxon>Muscomorpha</taxon>
        <taxon>Tephritoidea</taxon>
        <taxon>Tephritidae</taxon>
        <taxon>Bactrocera</taxon>
        <taxon>Bactrocera</taxon>
    </lineage>
</organism>
<name>ACT5_BACDO</name>
<dbReference type="EC" id="3.6.4.-" evidence="2"/>
<dbReference type="EMBL" id="L12256">
    <property type="protein sequence ID" value="AAA62344.1"/>
    <property type="molecule type" value="Genomic_DNA"/>
</dbReference>
<dbReference type="RefSeq" id="XP_011206241.1">
    <property type="nucleotide sequence ID" value="XM_011207939.4"/>
</dbReference>
<dbReference type="SMR" id="P45887"/>
<dbReference type="FunCoup" id="P45887">
    <property type="interactions" value="14"/>
</dbReference>
<dbReference type="EnsemblMetazoa" id="XM_011207939.3">
    <property type="protein sequence ID" value="XP_011206241.1"/>
    <property type="gene ID" value="LOC105228222"/>
</dbReference>
<dbReference type="GeneID" id="105228222"/>
<dbReference type="KEGG" id="bdr:105228222"/>
<dbReference type="InParanoid" id="P45887"/>
<dbReference type="OMA" id="ERFCASE"/>
<dbReference type="OrthoDB" id="422673at2759"/>
<dbReference type="Proteomes" id="UP000504616">
    <property type="component" value="Unplaced"/>
</dbReference>
<dbReference type="GO" id="GO:0005737">
    <property type="term" value="C:cytoplasm"/>
    <property type="evidence" value="ECO:0007669"/>
    <property type="project" value="UniProtKB-KW"/>
</dbReference>
<dbReference type="GO" id="GO:0005856">
    <property type="term" value="C:cytoskeleton"/>
    <property type="evidence" value="ECO:0007669"/>
    <property type="project" value="UniProtKB-SubCell"/>
</dbReference>
<dbReference type="GO" id="GO:0005524">
    <property type="term" value="F:ATP binding"/>
    <property type="evidence" value="ECO:0007669"/>
    <property type="project" value="UniProtKB-KW"/>
</dbReference>
<dbReference type="GO" id="GO:0016787">
    <property type="term" value="F:hydrolase activity"/>
    <property type="evidence" value="ECO:0007669"/>
    <property type="project" value="UniProtKB-KW"/>
</dbReference>
<dbReference type="CDD" id="cd10224">
    <property type="entry name" value="ASKHA_NBD_actin"/>
    <property type="match status" value="1"/>
</dbReference>
<dbReference type="FunFam" id="2.30.36.70:FF:000001">
    <property type="entry name" value="Actin, alpha skeletal muscle"/>
    <property type="match status" value="1"/>
</dbReference>
<dbReference type="FunFam" id="3.30.420.40:FF:000131">
    <property type="entry name" value="Actin, alpha skeletal muscle"/>
    <property type="match status" value="1"/>
</dbReference>
<dbReference type="FunFam" id="3.30.420.40:FF:000291">
    <property type="entry name" value="Actin, alpha skeletal muscle"/>
    <property type="match status" value="1"/>
</dbReference>
<dbReference type="FunFam" id="3.90.640.10:FF:000047">
    <property type="entry name" value="Actin, alpha skeletal muscle"/>
    <property type="match status" value="1"/>
</dbReference>
<dbReference type="FunFam" id="3.30.420.40:FF:000058">
    <property type="entry name" value="Putative actin-related protein 5"/>
    <property type="match status" value="1"/>
</dbReference>
<dbReference type="Gene3D" id="3.30.420.40">
    <property type="match status" value="2"/>
</dbReference>
<dbReference type="Gene3D" id="3.90.640.10">
    <property type="entry name" value="Actin, Chain A, domain 4"/>
    <property type="match status" value="1"/>
</dbReference>
<dbReference type="InterPro" id="IPR004000">
    <property type="entry name" value="Actin"/>
</dbReference>
<dbReference type="InterPro" id="IPR020902">
    <property type="entry name" value="Actin/actin-like_CS"/>
</dbReference>
<dbReference type="InterPro" id="IPR004001">
    <property type="entry name" value="Actin_CS"/>
</dbReference>
<dbReference type="InterPro" id="IPR043129">
    <property type="entry name" value="ATPase_NBD"/>
</dbReference>
<dbReference type="PANTHER" id="PTHR11937">
    <property type="entry name" value="ACTIN"/>
    <property type="match status" value="1"/>
</dbReference>
<dbReference type="Pfam" id="PF00022">
    <property type="entry name" value="Actin"/>
    <property type="match status" value="1"/>
</dbReference>
<dbReference type="PRINTS" id="PR00190">
    <property type="entry name" value="ACTIN"/>
</dbReference>
<dbReference type="SMART" id="SM00268">
    <property type="entry name" value="ACTIN"/>
    <property type="match status" value="1"/>
</dbReference>
<dbReference type="SUPFAM" id="SSF53067">
    <property type="entry name" value="Actin-like ATPase domain"/>
    <property type="match status" value="2"/>
</dbReference>
<dbReference type="PROSITE" id="PS00406">
    <property type="entry name" value="ACTINS_1"/>
    <property type="match status" value="1"/>
</dbReference>
<dbReference type="PROSITE" id="PS00432">
    <property type="entry name" value="ACTINS_2"/>
    <property type="match status" value="1"/>
</dbReference>
<dbReference type="PROSITE" id="PS01132">
    <property type="entry name" value="ACTINS_ACT_LIKE"/>
    <property type="match status" value="1"/>
</dbReference>
<proteinExistence type="evidence at transcript level"/>